<dbReference type="EMBL" id="X59942">
    <property type="protein sequence ID" value="CAA42567.1"/>
    <property type="molecule type" value="Genomic_DNA"/>
</dbReference>
<dbReference type="PIR" id="I51708">
    <property type="entry name" value="I51708"/>
</dbReference>
<dbReference type="SMR" id="Q02193"/>
<dbReference type="STRING" id="8083.ENSXMAP00000038285"/>
<dbReference type="GlyCosmos" id="Q02193">
    <property type="glycosylation" value="1 site, No reported glycans"/>
</dbReference>
<dbReference type="eggNOG" id="ENOG502QRU8">
    <property type="taxonomic scope" value="Eukaryota"/>
</dbReference>
<dbReference type="InParanoid" id="Q02193"/>
<dbReference type="Proteomes" id="UP000002852">
    <property type="component" value="Unassembled WGS sequence"/>
</dbReference>
<dbReference type="GO" id="GO:0030424">
    <property type="term" value="C:axon"/>
    <property type="evidence" value="ECO:0007669"/>
    <property type="project" value="TreeGrafter"/>
</dbReference>
<dbReference type="GO" id="GO:0030425">
    <property type="term" value="C:dendrite"/>
    <property type="evidence" value="ECO:0007669"/>
    <property type="project" value="TreeGrafter"/>
</dbReference>
<dbReference type="GO" id="GO:0005615">
    <property type="term" value="C:extracellular space"/>
    <property type="evidence" value="ECO:0007669"/>
    <property type="project" value="TreeGrafter"/>
</dbReference>
<dbReference type="GO" id="GO:0008021">
    <property type="term" value="C:synaptic vesicle"/>
    <property type="evidence" value="ECO:0007669"/>
    <property type="project" value="TreeGrafter"/>
</dbReference>
<dbReference type="GO" id="GO:0008083">
    <property type="term" value="F:growth factor activity"/>
    <property type="evidence" value="ECO:0007669"/>
    <property type="project" value="UniProtKB-KW"/>
</dbReference>
<dbReference type="GO" id="GO:0005163">
    <property type="term" value="F:nerve growth factor receptor binding"/>
    <property type="evidence" value="ECO:0007669"/>
    <property type="project" value="TreeGrafter"/>
</dbReference>
<dbReference type="GO" id="GO:0007169">
    <property type="term" value="P:cell surface receptor protein tyrosine kinase signaling pathway"/>
    <property type="evidence" value="ECO:0007669"/>
    <property type="project" value="TreeGrafter"/>
</dbReference>
<dbReference type="GO" id="GO:0050804">
    <property type="term" value="P:modulation of chemical synaptic transmission"/>
    <property type="evidence" value="ECO:0007669"/>
    <property type="project" value="TreeGrafter"/>
</dbReference>
<dbReference type="GO" id="GO:0043524">
    <property type="term" value="P:negative regulation of neuron apoptotic process"/>
    <property type="evidence" value="ECO:0007669"/>
    <property type="project" value="TreeGrafter"/>
</dbReference>
<dbReference type="GO" id="GO:0021675">
    <property type="term" value="P:nerve development"/>
    <property type="evidence" value="ECO:0007669"/>
    <property type="project" value="TreeGrafter"/>
</dbReference>
<dbReference type="GO" id="GO:0038180">
    <property type="term" value="P:nerve growth factor signaling pathway"/>
    <property type="evidence" value="ECO:0007669"/>
    <property type="project" value="TreeGrafter"/>
</dbReference>
<dbReference type="GO" id="GO:0048812">
    <property type="term" value="P:neuron projection morphogenesis"/>
    <property type="evidence" value="ECO:0007669"/>
    <property type="project" value="TreeGrafter"/>
</dbReference>
<dbReference type="FunFam" id="2.10.90.10:FF:000002">
    <property type="entry name" value="Brain-derived neurotrophic factor"/>
    <property type="match status" value="1"/>
</dbReference>
<dbReference type="Gene3D" id="2.10.90.10">
    <property type="entry name" value="Cystine-knot cytokines"/>
    <property type="match status" value="1"/>
</dbReference>
<dbReference type="InterPro" id="IPR020430">
    <property type="entry name" value="Brain-der_neurotrophic_factor"/>
</dbReference>
<dbReference type="InterPro" id="IPR029034">
    <property type="entry name" value="Cystine-knot_cytokine"/>
</dbReference>
<dbReference type="InterPro" id="IPR020408">
    <property type="entry name" value="Nerve_growth_factor-like"/>
</dbReference>
<dbReference type="InterPro" id="IPR002072">
    <property type="entry name" value="Nerve_growth_factor-rel"/>
</dbReference>
<dbReference type="InterPro" id="IPR019846">
    <property type="entry name" value="Nerve_growth_factor_CS"/>
</dbReference>
<dbReference type="PANTHER" id="PTHR11589:SF3">
    <property type="entry name" value="BRAIN-DERIVED NEUROTROPHIC FACTOR"/>
    <property type="match status" value="1"/>
</dbReference>
<dbReference type="PANTHER" id="PTHR11589">
    <property type="entry name" value="NERVE GROWTH FACTOR NGF -RELATED"/>
    <property type="match status" value="1"/>
</dbReference>
<dbReference type="Pfam" id="PF00243">
    <property type="entry name" value="NGF"/>
    <property type="match status" value="1"/>
</dbReference>
<dbReference type="PIRSF" id="PIRSF001789">
    <property type="entry name" value="NGF"/>
    <property type="match status" value="1"/>
</dbReference>
<dbReference type="PRINTS" id="PR01912">
    <property type="entry name" value="BDNFACTOR"/>
</dbReference>
<dbReference type="PRINTS" id="PR00268">
    <property type="entry name" value="NGF"/>
</dbReference>
<dbReference type="SMART" id="SM00140">
    <property type="entry name" value="NGF"/>
    <property type="match status" value="1"/>
</dbReference>
<dbReference type="SUPFAM" id="SSF57501">
    <property type="entry name" value="Cystine-knot cytokines"/>
    <property type="match status" value="1"/>
</dbReference>
<dbReference type="PROSITE" id="PS00248">
    <property type="entry name" value="NGF_1"/>
    <property type="match status" value="1"/>
</dbReference>
<dbReference type="PROSITE" id="PS50270">
    <property type="entry name" value="NGF_2"/>
    <property type="match status" value="1"/>
</dbReference>
<organism>
    <name type="scientific">Xiphophorus maculatus</name>
    <name type="common">Southern platyfish</name>
    <name type="synonym">Platypoecilus maculatus</name>
    <dbReference type="NCBI Taxonomy" id="8083"/>
    <lineage>
        <taxon>Eukaryota</taxon>
        <taxon>Metazoa</taxon>
        <taxon>Chordata</taxon>
        <taxon>Craniata</taxon>
        <taxon>Vertebrata</taxon>
        <taxon>Euteleostomi</taxon>
        <taxon>Actinopterygii</taxon>
        <taxon>Neopterygii</taxon>
        <taxon>Teleostei</taxon>
        <taxon>Neoteleostei</taxon>
        <taxon>Acanthomorphata</taxon>
        <taxon>Ovalentaria</taxon>
        <taxon>Atherinomorphae</taxon>
        <taxon>Cyprinodontiformes</taxon>
        <taxon>Poeciliidae</taxon>
        <taxon>Poeciliinae</taxon>
        <taxon>Xiphophorus</taxon>
    </lineage>
</organism>
<protein>
    <recommendedName>
        <fullName evidence="4">Neurotrophic factor BDNF precursor form</fullName>
        <shortName>proBDNF</shortName>
    </recommendedName>
    <alternativeName>
        <fullName>Brain-derived neurotrophic factor</fullName>
    </alternativeName>
    <component>
        <recommendedName>
            <fullName>Neurotrophic factor BDNF</fullName>
        </recommendedName>
    </component>
</protein>
<gene>
    <name type="primary">bdnf</name>
</gene>
<reference key="1">
    <citation type="journal article" date="1992" name="J. Neurochem.">
        <title>Brain-derived neurotrophic factor is more highly conserved in structure and function than nerve growth factor during vertebrate evolution.</title>
        <authorList>
            <person name="Gotz R."/>
            <person name="Raulf F."/>
            <person name="Schartl M."/>
        </authorList>
    </citation>
    <scope>NUCLEOTIDE SEQUENCE [GENOMIC DNA]</scope>
</reference>
<feature type="signal peptide" evidence="2">
    <location>
        <begin position="1"/>
        <end position="18"/>
    </location>
</feature>
<feature type="propeptide" id="PRO_0000019653">
    <location>
        <begin position="19"/>
        <end position="150"/>
    </location>
</feature>
<feature type="chain" id="PRO_0000019654" description="Neurotrophic factor BDNF">
    <location>
        <begin position="151"/>
        <end position="269"/>
    </location>
</feature>
<feature type="region of interest" description="Disordered" evidence="3">
    <location>
        <begin position="39"/>
        <end position="61"/>
    </location>
</feature>
<feature type="region of interest" description="Disordered" evidence="3">
    <location>
        <begin position="82"/>
        <end position="104"/>
    </location>
</feature>
<feature type="glycosylation site" description="N-linked (GlcNAc...) asparagine" evidence="2">
    <location>
        <position position="143"/>
    </location>
</feature>
<feature type="disulfide bond" evidence="1">
    <location>
        <begin position="163"/>
        <end position="230"/>
    </location>
</feature>
<feature type="disulfide bond" evidence="1">
    <location>
        <begin position="208"/>
        <end position="259"/>
    </location>
</feature>
<feature type="disulfide bond" evidence="1">
    <location>
        <begin position="218"/>
        <end position="261"/>
    </location>
</feature>
<accession>Q02193</accession>
<name>BDNF_XIPMA</name>
<comment type="function">
    <text>BDNF promotes the survival of neuronal populations that are all located either in the central nervous system or directly connected to it.</text>
</comment>
<comment type="similarity">
    <text evidence="4">Belongs to the NGF-beta family.</text>
</comment>
<proteinExistence type="inferred from homology"/>
<keyword id="KW-0165">Cleavage on pair of basic residues</keyword>
<keyword id="KW-1015">Disulfide bond</keyword>
<keyword id="KW-0325">Glycoprotein</keyword>
<keyword id="KW-0339">Growth factor</keyword>
<keyword id="KW-1185">Reference proteome</keyword>
<keyword id="KW-0732">Signal</keyword>
<evidence type="ECO:0000250" key="1"/>
<evidence type="ECO:0000255" key="2"/>
<evidence type="ECO:0000256" key="3">
    <source>
        <dbReference type="SAM" id="MobiDB-lite"/>
    </source>
</evidence>
<evidence type="ECO:0000305" key="4"/>
<sequence length="269" mass="29709">MTILFLTMVISYFSCMRAAPLRDAPGMRGHWTEGYLGAAATAPRGHGTPQSGGGPGQREELPSLTDTFEQVIEELLEVEGEAAHVGQGADKSQGGGGPSPVATAEANDVDLYNSRVMISNQVPLEPPLLFLLEEYKNYLDAANMSMRVRRHSDPSRRGELSVCDSISQWVTAVDKKTAIDMSGQTVTVMEKVPVPNGQLKQYFYETKCNPMGYTKDGCRGIDKRHYTSQCRTTQSYVRALTMDSKKKIGWRFIRIDTSCVCTLTIKRGR</sequence>